<gene>
    <name evidence="1" type="primary">zupT</name>
    <name type="ordered locus">Cag_0157</name>
</gene>
<sequence length="268" mass="28474">MTDNILFAFALTLFAGLSTGVGSLIGLLSKEFNPKVLTISLGFSAGVMIYVAMIEIMVKARESLVVGIGAEMGKVVTVLSFFAGIFLIALIDKLIPSYENPHELNVAQKLEECSENQKKKLMRMGLFSAVAIGIHNFPEGLATFMSGLSNPTLGVSIAVAIAIHNIPEGLAVSAPIFYATQSRKKAFILSFLSGLAEPVGALIGYFLLRSFFSPSLFGVVFGAVAGIMVYISLDELLPAAEEYGEHHFAIGGVIAGMVVMAISLLLFT</sequence>
<evidence type="ECO:0000255" key="1">
    <source>
        <dbReference type="HAMAP-Rule" id="MF_00548"/>
    </source>
</evidence>
<name>ZUPT_CHLCH</name>
<organism>
    <name type="scientific">Chlorobium chlorochromatii (strain CaD3)</name>
    <dbReference type="NCBI Taxonomy" id="340177"/>
    <lineage>
        <taxon>Bacteria</taxon>
        <taxon>Pseudomonadati</taxon>
        <taxon>Chlorobiota</taxon>
        <taxon>Chlorobiia</taxon>
        <taxon>Chlorobiales</taxon>
        <taxon>Chlorobiaceae</taxon>
        <taxon>Chlorobium/Pelodictyon group</taxon>
        <taxon>Chlorobium</taxon>
    </lineage>
</organism>
<accession>Q3AU90</accession>
<reference key="1">
    <citation type="submission" date="2005-08" db="EMBL/GenBank/DDBJ databases">
        <title>Complete sequence of Chlorobium chlorochromatii CaD3.</title>
        <authorList>
            <consortium name="US DOE Joint Genome Institute"/>
            <person name="Copeland A."/>
            <person name="Lucas S."/>
            <person name="Lapidus A."/>
            <person name="Barry K."/>
            <person name="Detter J.C."/>
            <person name="Glavina T."/>
            <person name="Hammon N."/>
            <person name="Israni S."/>
            <person name="Pitluck S."/>
            <person name="Bryant D."/>
            <person name="Schmutz J."/>
            <person name="Larimer F."/>
            <person name="Land M."/>
            <person name="Kyrpides N."/>
            <person name="Ivanova N."/>
            <person name="Richardson P."/>
        </authorList>
    </citation>
    <scope>NUCLEOTIDE SEQUENCE [LARGE SCALE GENOMIC DNA]</scope>
    <source>
        <strain>CaD3</strain>
    </source>
</reference>
<keyword id="KW-1003">Cell membrane</keyword>
<keyword id="KW-0406">Ion transport</keyword>
<keyword id="KW-0408">Iron</keyword>
<keyword id="KW-0472">Membrane</keyword>
<keyword id="KW-0479">Metal-binding</keyword>
<keyword id="KW-0812">Transmembrane</keyword>
<keyword id="KW-1133">Transmembrane helix</keyword>
<keyword id="KW-0813">Transport</keyword>
<keyword id="KW-0862">Zinc</keyword>
<keyword id="KW-0864">Zinc transport</keyword>
<protein>
    <recommendedName>
        <fullName evidence="1">Zinc transporter ZupT</fullName>
    </recommendedName>
</protein>
<comment type="function">
    <text evidence="1">Mediates zinc uptake. May also transport other divalent cations.</text>
</comment>
<comment type="catalytic activity">
    <reaction evidence="1">
        <text>Zn(2+)(in) = Zn(2+)(out)</text>
        <dbReference type="Rhea" id="RHEA:29351"/>
        <dbReference type="ChEBI" id="CHEBI:29105"/>
    </reaction>
</comment>
<comment type="subcellular location">
    <subcellularLocation>
        <location evidence="1">Cell membrane</location>
        <topology evidence="1">Multi-pass membrane protein</topology>
    </subcellularLocation>
</comment>
<comment type="similarity">
    <text evidence="1">Belongs to the ZIP transporter (TC 2.A.5) family. ZupT subfamily.</text>
</comment>
<feature type="chain" id="PRO_1000017772" description="Zinc transporter ZupT">
    <location>
        <begin position="1"/>
        <end position="268"/>
    </location>
</feature>
<feature type="transmembrane region" description="Helical" evidence="1">
    <location>
        <begin position="5"/>
        <end position="25"/>
    </location>
</feature>
<feature type="transmembrane region" description="Helical" evidence="1">
    <location>
        <begin position="36"/>
        <end position="56"/>
    </location>
</feature>
<feature type="transmembrane region" description="Helical" evidence="1">
    <location>
        <begin position="75"/>
        <end position="95"/>
    </location>
</feature>
<feature type="transmembrane region" description="Helical" evidence="1">
    <location>
        <begin position="124"/>
        <end position="144"/>
    </location>
</feature>
<feature type="transmembrane region" description="Helical" evidence="1">
    <location>
        <begin position="157"/>
        <end position="177"/>
    </location>
</feature>
<feature type="transmembrane region" description="Helical" evidence="1">
    <location>
        <begin position="187"/>
        <end position="207"/>
    </location>
</feature>
<feature type="transmembrane region" description="Helical" evidence="1">
    <location>
        <begin position="211"/>
        <end position="231"/>
    </location>
</feature>
<feature type="transmembrane region" description="Helical" evidence="1">
    <location>
        <begin position="248"/>
        <end position="268"/>
    </location>
</feature>
<feature type="binding site" description="M2 metal binding site" evidence="1">
    <location>
        <position position="136"/>
    </location>
    <ligand>
        <name>Fe(2+)</name>
        <dbReference type="ChEBI" id="CHEBI:29033"/>
    </ligand>
</feature>
<feature type="binding site" description="M2 metal binding site" evidence="1">
    <location>
        <position position="139"/>
    </location>
    <ligand>
        <name>Fe(2+)</name>
        <dbReference type="ChEBI" id="CHEBI:29033"/>
    </ligand>
</feature>
<feature type="binding site" description="M1 metal binding site" evidence="1">
    <location>
        <position position="139"/>
    </location>
    <ligand>
        <name>Zn(2+)</name>
        <dbReference type="ChEBI" id="CHEBI:29105"/>
    </ligand>
</feature>
<feature type="binding site" description="M1 metal binding site" evidence="1">
    <location>
        <position position="164"/>
    </location>
    <ligand>
        <name>Zn(2+)</name>
        <dbReference type="ChEBI" id="CHEBI:29105"/>
    </ligand>
</feature>
<feature type="binding site" description="M2 metal binding site" evidence="1">
    <location>
        <position position="165"/>
    </location>
    <ligand>
        <name>Fe(2+)</name>
        <dbReference type="ChEBI" id="CHEBI:29033"/>
    </ligand>
</feature>
<feature type="binding site" description="M2 metal binding site" evidence="1">
    <location>
        <position position="168"/>
    </location>
    <ligand>
        <name>Fe(2+)</name>
        <dbReference type="ChEBI" id="CHEBI:29033"/>
    </ligand>
</feature>
<feature type="binding site" description="M1 metal binding site" evidence="1">
    <location>
        <position position="168"/>
    </location>
    <ligand>
        <name>Zn(2+)</name>
        <dbReference type="ChEBI" id="CHEBI:29105"/>
    </ligand>
</feature>
<feature type="binding site" description="M2 metal binding site" evidence="1">
    <location>
        <position position="197"/>
    </location>
    <ligand>
        <name>Fe(2+)</name>
        <dbReference type="ChEBI" id="CHEBI:29033"/>
    </ligand>
</feature>
<dbReference type="EMBL" id="CP000108">
    <property type="protein sequence ID" value="ABB27435.1"/>
    <property type="molecule type" value="Genomic_DNA"/>
</dbReference>
<dbReference type="SMR" id="Q3AU90"/>
<dbReference type="STRING" id="340177.Cag_0157"/>
<dbReference type="KEGG" id="cch:Cag_0157"/>
<dbReference type="eggNOG" id="COG0428">
    <property type="taxonomic scope" value="Bacteria"/>
</dbReference>
<dbReference type="HOGENOM" id="CLU_015114_1_3_10"/>
<dbReference type="OrthoDB" id="9787346at2"/>
<dbReference type="GO" id="GO:0005886">
    <property type="term" value="C:plasma membrane"/>
    <property type="evidence" value="ECO:0007669"/>
    <property type="project" value="UniProtKB-SubCell"/>
</dbReference>
<dbReference type="GO" id="GO:0046872">
    <property type="term" value="F:metal ion binding"/>
    <property type="evidence" value="ECO:0007669"/>
    <property type="project" value="UniProtKB-KW"/>
</dbReference>
<dbReference type="GO" id="GO:0005385">
    <property type="term" value="F:zinc ion transmembrane transporter activity"/>
    <property type="evidence" value="ECO:0007669"/>
    <property type="project" value="UniProtKB-UniRule"/>
</dbReference>
<dbReference type="HAMAP" id="MF_00548">
    <property type="entry name" value="ZupT"/>
    <property type="match status" value="1"/>
</dbReference>
<dbReference type="InterPro" id="IPR003689">
    <property type="entry name" value="ZIP"/>
</dbReference>
<dbReference type="InterPro" id="IPR023498">
    <property type="entry name" value="Zn_transptr_ZupT"/>
</dbReference>
<dbReference type="NCBIfam" id="NF003243">
    <property type="entry name" value="PRK04201.1"/>
    <property type="match status" value="1"/>
</dbReference>
<dbReference type="PANTHER" id="PTHR11040:SF205">
    <property type="entry name" value="ZINC TRANSPORTER ZUPT"/>
    <property type="match status" value="1"/>
</dbReference>
<dbReference type="PANTHER" id="PTHR11040">
    <property type="entry name" value="ZINC/IRON TRANSPORTER"/>
    <property type="match status" value="1"/>
</dbReference>
<dbReference type="Pfam" id="PF02535">
    <property type="entry name" value="Zip"/>
    <property type="match status" value="1"/>
</dbReference>
<proteinExistence type="inferred from homology"/>